<proteinExistence type="inferred from homology"/>
<geneLocation type="chloroplast"/>
<feature type="chain" id="PRO_0000059039" description="Photosystem II reaction center protein Psb30">
    <location>
        <begin position="1"/>
        <end position="33"/>
    </location>
</feature>
<feature type="transmembrane region" description="Helical" evidence="1">
    <location>
        <begin position="5"/>
        <end position="25"/>
    </location>
</feature>
<accession>Q8WI31</accession>
<gene>
    <name evidence="1" type="primary">psb30</name>
    <name evidence="1" type="synonym">ycf12</name>
</gene>
<keyword id="KW-0150">Chloroplast</keyword>
<keyword id="KW-0472">Membrane</keyword>
<keyword id="KW-0602">Photosynthesis</keyword>
<keyword id="KW-0604">Photosystem II</keyword>
<keyword id="KW-0934">Plastid</keyword>
<keyword id="KW-0793">Thylakoid</keyword>
<keyword id="KW-0812">Transmembrane</keyword>
<keyword id="KW-1133">Transmembrane helix</keyword>
<protein>
    <recommendedName>
        <fullName evidence="1">Photosystem II reaction center protein Psb30</fullName>
    </recommendedName>
    <alternativeName>
        <fullName evidence="1">Photosystem II reaction center protein Ycf12</fullName>
    </alternativeName>
</protein>
<dbReference type="EMBL" id="AP004638">
    <property type="protein sequence ID" value="BAB84200.1"/>
    <property type="molecule type" value="Genomic_DNA"/>
</dbReference>
<dbReference type="RefSeq" id="NP_569613.1">
    <property type="nucleotide sequence ID" value="NC_003386.1"/>
</dbReference>
<dbReference type="SMR" id="Q8WI31"/>
<dbReference type="GeneID" id="2545232"/>
<dbReference type="GO" id="GO:0009535">
    <property type="term" value="C:chloroplast thylakoid membrane"/>
    <property type="evidence" value="ECO:0007669"/>
    <property type="project" value="UniProtKB-SubCell"/>
</dbReference>
<dbReference type="GO" id="GO:0009523">
    <property type="term" value="C:photosystem II"/>
    <property type="evidence" value="ECO:0007669"/>
    <property type="project" value="UniProtKB-KW"/>
</dbReference>
<dbReference type="GO" id="GO:0003779">
    <property type="term" value="F:actin binding"/>
    <property type="evidence" value="ECO:0007669"/>
    <property type="project" value="InterPro"/>
</dbReference>
<dbReference type="GO" id="GO:0015979">
    <property type="term" value="P:photosynthesis"/>
    <property type="evidence" value="ECO:0007669"/>
    <property type="project" value="UniProtKB-KW"/>
</dbReference>
<dbReference type="HAMAP" id="MF_01329">
    <property type="entry name" value="PSII_Psb30_Ycf12"/>
    <property type="match status" value="1"/>
</dbReference>
<dbReference type="InterPro" id="IPR027310">
    <property type="entry name" value="Profilin_CS"/>
</dbReference>
<dbReference type="InterPro" id="IPR010284">
    <property type="entry name" value="PSII_Ycf12_core-subunit"/>
</dbReference>
<dbReference type="NCBIfam" id="NF010239">
    <property type="entry name" value="PRK13686.1"/>
    <property type="match status" value="1"/>
</dbReference>
<dbReference type="Pfam" id="PF05969">
    <property type="entry name" value="PSII_Ycf12"/>
    <property type="match status" value="1"/>
</dbReference>
<organism>
    <name type="scientific">Psilotum nudum</name>
    <name type="common">Whisk fern</name>
    <name type="synonym">Lycopodium nudum</name>
    <dbReference type="NCBI Taxonomy" id="3240"/>
    <lineage>
        <taxon>Eukaryota</taxon>
        <taxon>Viridiplantae</taxon>
        <taxon>Streptophyta</taxon>
        <taxon>Embryophyta</taxon>
        <taxon>Tracheophyta</taxon>
        <taxon>Polypodiopsida</taxon>
        <taxon>Ophioglossidae</taxon>
        <taxon>Psilotales</taxon>
        <taxon>Psilotaceae</taxon>
        <taxon>Psilotum</taxon>
    </lineage>
</organism>
<comment type="function">
    <text evidence="1">A core subunit of photosystem II (PSII), probably helps stabilize the reaction center.</text>
</comment>
<comment type="subunit">
    <text evidence="1">PSII is composed of 1 copy each of membrane proteins PsbA, PsbB, PsbC, PsbD, PsbE, PsbF, PsbH, PsbI, PsbJ, PsbK, PsbL, PsbM, PsbT, PsbX, PsbY, PsbZ, Psb30/Ycf12, peripheral proteins of the oxygen-evolving complex and a large number of cofactors. It forms dimeric complexes.</text>
</comment>
<comment type="subcellular location">
    <subcellularLocation>
        <location evidence="1">Plastid</location>
        <location evidence="1">Chloroplast thylakoid membrane</location>
        <topology evidence="1">Single-pass membrane protein</topology>
    </subcellularLocation>
</comment>
<comment type="similarity">
    <text evidence="1">Belongs to the Psb30/Ycf12 family.</text>
</comment>
<sequence>MTWELIAQLTFLTSIIVSGPLVIALLAIRKGNL</sequence>
<reference key="1">
    <citation type="journal article" date="2004" name="Mol. Biol. Evol.">
        <title>Chloroplast phylogeny indicates that bryophytes are monophyletic.</title>
        <authorList>
            <person name="Nishiyama T."/>
            <person name="Wolf P.G."/>
            <person name="Kugita M."/>
            <person name="Sinclair R.B."/>
            <person name="Sugita M."/>
            <person name="Sugiura C."/>
            <person name="Wakasugi T."/>
            <person name="Yamada K."/>
            <person name="Yoshinaga K."/>
            <person name="Yamaguchi K."/>
            <person name="Ueda K."/>
            <person name="Hasebe M."/>
        </authorList>
    </citation>
    <scope>NUCLEOTIDE SEQUENCE [LARGE SCALE GENOMIC DNA]</scope>
    <source>
        <strain>Kingyoku</strain>
    </source>
</reference>
<name>PSB30_PSINU</name>
<evidence type="ECO:0000255" key="1">
    <source>
        <dbReference type="HAMAP-Rule" id="MF_01329"/>
    </source>
</evidence>